<reference key="1">
    <citation type="journal article" date="2004" name="Science">
        <title>Illuminating the evolutionary history of chlamydiae.</title>
        <authorList>
            <person name="Horn M."/>
            <person name="Collingro A."/>
            <person name="Schmitz-Esser S."/>
            <person name="Beier C.L."/>
            <person name="Purkhold U."/>
            <person name="Fartmann B."/>
            <person name="Brandt P."/>
            <person name="Nyakatura G.J."/>
            <person name="Droege M."/>
            <person name="Frishman D."/>
            <person name="Rattei T."/>
            <person name="Mewes H.-W."/>
            <person name="Wagner M."/>
        </authorList>
    </citation>
    <scope>NUCLEOTIDE SEQUENCE [LARGE SCALE GENOMIC DNA]</scope>
    <source>
        <strain>UWE25</strain>
    </source>
</reference>
<evidence type="ECO:0000255" key="1">
    <source>
        <dbReference type="HAMAP-Rule" id="MF_00061"/>
    </source>
</evidence>
<comment type="function">
    <text evidence="1">Catalyzes the phosphorylation of the position 2 hydroxy group of 4-diphosphocytidyl-2C-methyl-D-erythritol.</text>
</comment>
<comment type="catalytic activity">
    <reaction evidence="1">
        <text>4-CDP-2-C-methyl-D-erythritol + ATP = 4-CDP-2-C-methyl-D-erythritol 2-phosphate + ADP + H(+)</text>
        <dbReference type="Rhea" id="RHEA:18437"/>
        <dbReference type="ChEBI" id="CHEBI:15378"/>
        <dbReference type="ChEBI" id="CHEBI:30616"/>
        <dbReference type="ChEBI" id="CHEBI:57823"/>
        <dbReference type="ChEBI" id="CHEBI:57919"/>
        <dbReference type="ChEBI" id="CHEBI:456216"/>
        <dbReference type="EC" id="2.7.1.148"/>
    </reaction>
</comment>
<comment type="pathway">
    <text evidence="1">Isoprenoid biosynthesis; isopentenyl diphosphate biosynthesis via DXP pathway; isopentenyl diphosphate from 1-deoxy-D-xylulose 5-phosphate: step 3/6.</text>
</comment>
<comment type="similarity">
    <text evidence="1">Belongs to the GHMP kinase family. IspE subfamily.</text>
</comment>
<sequence>MRLSIIEIINSMFSIRLFSPAKINLFLKVIGKRADGYHELSSLFQTISAGDILTFQRQTIDTLTCSDPYLPTDDSNLVLKAMRLFRSKTGLDLHLRIHLDKRLPSQAGLGGGSSNAATTLWACNQLAGEIVTTEELMQWGSEIGADIPFFFSKGTAHCTGRGECVNSLEPLAHCKIWIVKPPFGLSTPEVYKHLNFSQPNENNNDYASFKEKPYFNDLEASAFEIKPELKILKNTLLSSGFDTVLMSGSGSSFFCIGQGQIPASFKAFSAYFINRSSNRWYSTLPKLT</sequence>
<organism>
    <name type="scientific">Protochlamydia amoebophila (strain UWE25)</name>
    <dbReference type="NCBI Taxonomy" id="264201"/>
    <lineage>
        <taxon>Bacteria</taxon>
        <taxon>Pseudomonadati</taxon>
        <taxon>Chlamydiota</taxon>
        <taxon>Chlamydiia</taxon>
        <taxon>Parachlamydiales</taxon>
        <taxon>Parachlamydiaceae</taxon>
        <taxon>Candidatus Protochlamydia</taxon>
    </lineage>
</organism>
<protein>
    <recommendedName>
        <fullName evidence="1">4-diphosphocytidyl-2-C-methyl-D-erythritol kinase</fullName>
        <shortName evidence="1">CMK</shortName>
        <ecNumber evidence="1">2.7.1.148</ecNumber>
    </recommendedName>
    <alternativeName>
        <fullName evidence="1">4-(cytidine-5'-diphospho)-2-C-methyl-D-erythritol kinase</fullName>
    </alternativeName>
</protein>
<gene>
    <name evidence="1" type="primary">ispE</name>
    <name type="ordered locus">pc1589</name>
</gene>
<name>ISPE_PARUW</name>
<proteinExistence type="inferred from homology"/>
<accession>Q6MAT6</accession>
<feature type="chain" id="PRO_0000189241" description="4-diphosphocytidyl-2-C-methyl-D-erythritol kinase">
    <location>
        <begin position="1"/>
        <end position="288"/>
    </location>
</feature>
<feature type="active site" evidence="1">
    <location>
        <position position="22"/>
    </location>
</feature>
<feature type="active site" evidence="1">
    <location>
        <position position="146"/>
    </location>
</feature>
<feature type="binding site" evidence="1">
    <location>
        <begin position="104"/>
        <end position="114"/>
    </location>
    <ligand>
        <name>ATP</name>
        <dbReference type="ChEBI" id="CHEBI:30616"/>
    </ligand>
</feature>
<dbReference type="EC" id="2.7.1.148" evidence="1"/>
<dbReference type="EMBL" id="BX908798">
    <property type="protein sequence ID" value="CAF24313.1"/>
    <property type="molecule type" value="Genomic_DNA"/>
</dbReference>
<dbReference type="SMR" id="Q6MAT6"/>
<dbReference type="STRING" id="264201.pc1589"/>
<dbReference type="eggNOG" id="COG1947">
    <property type="taxonomic scope" value="Bacteria"/>
</dbReference>
<dbReference type="HOGENOM" id="CLU_053057_0_0_0"/>
<dbReference type="UniPathway" id="UPA00056">
    <property type="reaction ID" value="UER00094"/>
</dbReference>
<dbReference type="Proteomes" id="UP000000529">
    <property type="component" value="Chromosome"/>
</dbReference>
<dbReference type="GO" id="GO:0050515">
    <property type="term" value="F:4-(cytidine 5'-diphospho)-2-C-methyl-D-erythritol kinase activity"/>
    <property type="evidence" value="ECO:0007669"/>
    <property type="project" value="UniProtKB-UniRule"/>
</dbReference>
<dbReference type="GO" id="GO:0005524">
    <property type="term" value="F:ATP binding"/>
    <property type="evidence" value="ECO:0007669"/>
    <property type="project" value="UniProtKB-UniRule"/>
</dbReference>
<dbReference type="GO" id="GO:0019288">
    <property type="term" value="P:isopentenyl diphosphate biosynthetic process, methylerythritol 4-phosphate pathway"/>
    <property type="evidence" value="ECO:0007669"/>
    <property type="project" value="UniProtKB-UniRule"/>
</dbReference>
<dbReference type="GO" id="GO:0016114">
    <property type="term" value="P:terpenoid biosynthetic process"/>
    <property type="evidence" value="ECO:0007669"/>
    <property type="project" value="InterPro"/>
</dbReference>
<dbReference type="Gene3D" id="3.30.230.10">
    <property type="match status" value="1"/>
</dbReference>
<dbReference type="Gene3D" id="3.30.70.890">
    <property type="entry name" value="GHMP kinase, C-terminal domain"/>
    <property type="match status" value="1"/>
</dbReference>
<dbReference type="HAMAP" id="MF_00061">
    <property type="entry name" value="IspE"/>
    <property type="match status" value="1"/>
</dbReference>
<dbReference type="InterPro" id="IPR013750">
    <property type="entry name" value="GHMP_kinase_C_dom"/>
</dbReference>
<dbReference type="InterPro" id="IPR036554">
    <property type="entry name" value="GHMP_kinase_C_sf"/>
</dbReference>
<dbReference type="InterPro" id="IPR006204">
    <property type="entry name" value="GHMP_kinase_N_dom"/>
</dbReference>
<dbReference type="InterPro" id="IPR004424">
    <property type="entry name" value="IspE"/>
</dbReference>
<dbReference type="InterPro" id="IPR020568">
    <property type="entry name" value="Ribosomal_Su5_D2-typ_SF"/>
</dbReference>
<dbReference type="InterPro" id="IPR014721">
    <property type="entry name" value="Ribsml_uS5_D2-typ_fold_subgr"/>
</dbReference>
<dbReference type="NCBIfam" id="TIGR00154">
    <property type="entry name" value="ispE"/>
    <property type="match status" value="1"/>
</dbReference>
<dbReference type="PANTHER" id="PTHR43527">
    <property type="entry name" value="4-DIPHOSPHOCYTIDYL-2-C-METHYL-D-ERYTHRITOL KINASE, CHLOROPLASTIC"/>
    <property type="match status" value="1"/>
</dbReference>
<dbReference type="PANTHER" id="PTHR43527:SF2">
    <property type="entry name" value="4-DIPHOSPHOCYTIDYL-2-C-METHYL-D-ERYTHRITOL KINASE, CHLOROPLASTIC"/>
    <property type="match status" value="1"/>
</dbReference>
<dbReference type="Pfam" id="PF08544">
    <property type="entry name" value="GHMP_kinases_C"/>
    <property type="match status" value="1"/>
</dbReference>
<dbReference type="Pfam" id="PF00288">
    <property type="entry name" value="GHMP_kinases_N"/>
    <property type="match status" value="1"/>
</dbReference>
<dbReference type="PIRSF" id="PIRSF010376">
    <property type="entry name" value="IspE"/>
    <property type="match status" value="1"/>
</dbReference>
<dbReference type="SUPFAM" id="SSF55060">
    <property type="entry name" value="GHMP Kinase, C-terminal domain"/>
    <property type="match status" value="1"/>
</dbReference>
<dbReference type="SUPFAM" id="SSF54211">
    <property type="entry name" value="Ribosomal protein S5 domain 2-like"/>
    <property type="match status" value="1"/>
</dbReference>
<keyword id="KW-0067">ATP-binding</keyword>
<keyword id="KW-0414">Isoprene biosynthesis</keyword>
<keyword id="KW-0418">Kinase</keyword>
<keyword id="KW-0547">Nucleotide-binding</keyword>
<keyword id="KW-1185">Reference proteome</keyword>
<keyword id="KW-0808">Transferase</keyword>